<feature type="chain" id="PRO_0000081812" description="RNA-binding protein 38">
    <location>
        <begin position="1"/>
        <end position="239"/>
    </location>
</feature>
<feature type="domain" description="RRM" evidence="1">
    <location>
        <begin position="34"/>
        <end position="111"/>
    </location>
</feature>
<feature type="splice variant" id="VSP_035881" description="In isoform 2." evidence="6">
    <location>
        <begin position="122"/>
        <end position="239"/>
    </location>
</feature>
<feature type="sequence variant" id="VAR_015225" description="In dbSNP:rs1065288." evidence="5">
    <original>A</original>
    <variation>V</variation>
    <location>
        <position position="178"/>
    </location>
</feature>
<feature type="sequence variant" id="VAR_015226" description="In dbSNP:rs1065289." evidence="5">
    <original>A</original>
    <variation>D</variation>
    <location>
        <position position="200"/>
    </location>
</feature>
<feature type="sequence variant" id="VAR_015227" description="In dbSNP:rs1065290." evidence="5">
    <original>P</original>
    <variation>H</variation>
    <location>
        <position position="212"/>
    </location>
</feature>
<feature type="sequence variant" id="VAR_059823" description="In dbSNP:rs16980970.">
    <original>V</original>
    <variation>L</variation>
    <location>
        <position position="226"/>
    </location>
</feature>
<feature type="sequence conflict" description="In Ref. 4; CAA53063." evidence="6" ref="4">
    <original>P</original>
    <variation>S</variation>
    <location>
        <position position="15"/>
    </location>
</feature>
<feature type="sequence conflict" description="In Ref. 4; CAA53063." evidence="6" ref="4">
    <original>AMH</original>
    <variation>VMY</variation>
    <location>
        <begin position="23"/>
        <end position="25"/>
    </location>
</feature>
<feature type="sequence conflict" description="In Ref. 4; CAA53063." evidence="6" ref="4">
    <original>H</original>
    <variation>Y</variation>
    <location>
        <position position="25"/>
    </location>
</feature>
<feature type="sequence conflict" description="In Ref. 4; CAA53063." evidence="6" ref="4">
    <original>D</original>
    <variation>G</variation>
    <location>
        <position position="30"/>
    </location>
</feature>
<feature type="sequence conflict" description="In Ref. 4; CAA53063/CAA53064." evidence="6" ref="4">
    <original>RS</original>
    <variation>WC</variation>
    <location>
        <begin position="116"/>
        <end position="117"/>
    </location>
</feature>
<feature type="turn" evidence="7">
    <location>
        <begin position="32"/>
        <end position="34"/>
    </location>
</feature>
<feature type="strand" evidence="7">
    <location>
        <begin position="35"/>
        <end position="40"/>
    </location>
</feature>
<feature type="helix" evidence="7">
    <location>
        <begin position="47"/>
        <end position="54"/>
    </location>
</feature>
<feature type="helix" evidence="7">
    <location>
        <begin position="55"/>
        <end position="57"/>
    </location>
</feature>
<feature type="strand" evidence="7">
    <location>
        <begin position="60"/>
        <end position="67"/>
    </location>
</feature>
<feature type="turn" evidence="7">
    <location>
        <begin position="69"/>
        <end position="71"/>
    </location>
</feature>
<feature type="strand" evidence="7">
    <location>
        <begin position="73"/>
        <end position="84"/>
    </location>
</feature>
<feature type="helix" evidence="7">
    <location>
        <begin position="85"/>
        <end position="92"/>
    </location>
</feature>
<feature type="strand" evidence="7">
    <location>
        <begin position="93"/>
        <end position="96"/>
    </location>
</feature>
<feature type="strand" evidence="7">
    <location>
        <begin position="105"/>
        <end position="108"/>
    </location>
</feature>
<feature type="helix" evidence="7">
    <location>
        <begin position="109"/>
        <end position="112"/>
    </location>
</feature>
<evidence type="ECO:0000255" key="1">
    <source>
        <dbReference type="PROSITE-ProRule" id="PRU00176"/>
    </source>
</evidence>
<evidence type="ECO:0000269" key="2">
    <source>
    </source>
</evidence>
<evidence type="ECO:0000269" key="3">
    <source>
    </source>
</evidence>
<evidence type="ECO:0000269" key="4">
    <source>
    </source>
</evidence>
<evidence type="ECO:0000269" key="5">
    <source ref="4"/>
</evidence>
<evidence type="ECO:0000305" key="6"/>
<evidence type="ECO:0007829" key="7">
    <source>
        <dbReference type="PDB" id="6JVY"/>
    </source>
</evidence>
<protein>
    <recommendedName>
        <fullName>RNA-binding protein 38</fullName>
    </recommendedName>
    <alternativeName>
        <fullName>CLL-associated antigen KW-5</fullName>
    </alternativeName>
    <alternativeName>
        <fullName>HSRNASEB</fullName>
    </alternativeName>
    <alternativeName>
        <fullName>RNA-binding motif protein 38</fullName>
    </alternativeName>
    <alternativeName>
        <fullName>RNA-binding region-containing protein 1</fullName>
    </alternativeName>
    <alternativeName>
        <fullName>ssDNA-binding protein SEB4</fullName>
    </alternativeName>
</protein>
<dbReference type="EMBL" id="AF432218">
    <property type="protein sequence ID" value="AAL99924.1"/>
    <property type="status" value="ALT_INIT"/>
    <property type="molecule type" value="mRNA"/>
</dbReference>
<dbReference type="EMBL" id="AL109955">
    <property type="status" value="NOT_ANNOTATED_CDS"/>
    <property type="molecule type" value="Genomic_DNA"/>
</dbReference>
<dbReference type="EMBL" id="CH471077">
    <property type="protein sequence ID" value="EAW75522.1"/>
    <property type="status" value="ALT_SEQ"/>
    <property type="molecule type" value="Genomic_DNA"/>
</dbReference>
<dbReference type="EMBL" id="X75314">
    <property type="protein sequence ID" value="CAA53063.1"/>
    <property type="molecule type" value="mRNA"/>
</dbReference>
<dbReference type="EMBL" id="X75315">
    <property type="protein sequence ID" value="CAA53064.1"/>
    <property type="status" value="ALT_SEQ"/>
    <property type="molecule type" value="mRNA"/>
</dbReference>
<dbReference type="EMBL" id="BC018711">
    <property type="protein sequence ID" value="AAH18711.1"/>
    <property type="status" value="ALT_INIT"/>
    <property type="molecule type" value="mRNA"/>
</dbReference>
<dbReference type="CCDS" id="CCDS46617.1">
    <molecule id="Q9H0Z9-1"/>
</dbReference>
<dbReference type="CCDS" id="CCDS46618.1">
    <molecule id="Q9H0Z9-2"/>
</dbReference>
<dbReference type="RefSeq" id="NP_001278709.1">
    <property type="nucleotide sequence ID" value="NM_001291780.1"/>
</dbReference>
<dbReference type="RefSeq" id="NP_059965.2">
    <molecule id="Q9H0Z9-1"/>
    <property type="nucleotide sequence ID" value="NM_017495.5"/>
</dbReference>
<dbReference type="RefSeq" id="NP_906270.1">
    <molecule id="Q9H0Z9-2"/>
    <property type="nucleotide sequence ID" value="NM_183425.3"/>
</dbReference>
<dbReference type="PDB" id="2CQD">
    <property type="method" value="NMR"/>
    <property type="chains" value="A=24-126"/>
</dbReference>
<dbReference type="PDB" id="6JVX">
    <property type="method" value="X-ray"/>
    <property type="resolution" value="2.30 A"/>
    <property type="chains" value="A=26-121"/>
</dbReference>
<dbReference type="PDB" id="6JVY">
    <property type="method" value="X-ray"/>
    <property type="resolution" value="2.00 A"/>
    <property type="chains" value="A=26-121"/>
</dbReference>
<dbReference type="PDBsum" id="2CQD"/>
<dbReference type="PDBsum" id="6JVX"/>
<dbReference type="PDBsum" id="6JVY"/>
<dbReference type="SMR" id="Q9H0Z9"/>
<dbReference type="BioGRID" id="120710">
    <property type="interactions" value="30"/>
</dbReference>
<dbReference type="FunCoup" id="Q9H0Z9">
    <property type="interactions" value="692"/>
</dbReference>
<dbReference type="IntAct" id="Q9H0Z9">
    <property type="interactions" value="20"/>
</dbReference>
<dbReference type="STRING" id="9606.ENSP00000348538"/>
<dbReference type="GlyGen" id="Q9H0Z9">
    <property type="glycosylation" value="1 site, 1 O-linked glycan (1 site)"/>
</dbReference>
<dbReference type="iPTMnet" id="Q9H0Z9"/>
<dbReference type="PhosphoSitePlus" id="Q9H0Z9"/>
<dbReference type="BioMuta" id="RBM38"/>
<dbReference type="DMDM" id="215273895"/>
<dbReference type="jPOST" id="Q9H0Z9"/>
<dbReference type="MassIVE" id="Q9H0Z9"/>
<dbReference type="PaxDb" id="9606-ENSP00000348538"/>
<dbReference type="PeptideAtlas" id="Q9H0Z9"/>
<dbReference type="ProteomicsDB" id="80346">
    <molecule id="Q9H0Z9-1"/>
</dbReference>
<dbReference type="ProteomicsDB" id="80347">
    <molecule id="Q9H0Z9-2"/>
</dbReference>
<dbReference type="Pumba" id="Q9H0Z9"/>
<dbReference type="Antibodypedia" id="28985">
    <property type="antibodies" value="128 antibodies from 21 providers"/>
</dbReference>
<dbReference type="DNASU" id="55544"/>
<dbReference type="Ensembl" id="ENST00000356208.10">
    <molecule id="Q9H0Z9-1"/>
    <property type="protein sequence ID" value="ENSP00000348538.5"/>
    <property type="gene ID" value="ENSG00000132819.17"/>
</dbReference>
<dbReference type="Ensembl" id="ENST00000440234.6">
    <molecule id="Q9H0Z9-2"/>
    <property type="protein sequence ID" value="ENSP00000407848.2"/>
    <property type="gene ID" value="ENSG00000132819.17"/>
</dbReference>
<dbReference type="GeneID" id="55544"/>
<dbReference type="KEGG" id="hsa:55544"/>
<dbReference type="MANE-Select" id="ENST00000356208.10">
    <property type="protein sequence ID" value="ENSP00000348538.5"/>
    <property type="RefSeq nucleotide sequence ID" value="NM_017495.6"/>
    <property type="RefSeq protein sequence ID" value="NP_059965.2"/>
</dbReference>
<dbReference type="UCSC" id="uc010zzj.3">
    <molecule id="Q9H0Z9-1"/>
    <property type="organism name" value="human"/>
</dbReference>
<dbReference type="AGR" id="HGNC:15818"/>
<dbReference type="CTD" id="55544"/>
<dbReference type="DisGeNET" id="55544"/>
<dbReference type="GeneCards" id="RBM38"/>
<dbReference type="HGNC" id="HGNC:15818">
    <property type="gene designation" value="RBM38"/>
</dbReference>
<dbReference type="HPA" id="ENSG00000132819">
    <property type="expression patterns" value="Tissue enhanced (bone marrow, skeletal muscle)"/>
</dbReference>
<dbReference type="MIM" id="612428">
    <property type="type" value="gene"/>
</dbReference>
<dbReference type="neXtProt" id="NX_Q9H0Z9"/>
<dbReference type="OpenTargets" id="ENSG00000132819"/>
<dbReference type="PharmGKB" id="PA34449"/>
<dbReference type="VEuPathDB" id="HostDB:ENSG00000132819"/>
<dbReference type="eggNOG" id="KOG0149">
    <property type="taxonomic scope" value="Eukaryota"/>
</dbReference>
<dbReference type="GeneTree" id="ENSGT00940000158489"/>
<dbReference type="HOGENOM" id="CLU_065652_0_1_1"/>
<dbReference type="InParanoid" id="Q9H0Z9"/>
<dbReference type="OMA" id="TFVQYPA"/>
<dbReference type="OrthoDB" id="4207594at2759"/>
<dbReference type="PAN-GO" id="Q9H0Z9">
    <property type="GO annotations" value="5 GO annotations based on evolutionary models"/>
</dbReference>
<dbReference type="PhylomeDB" id="Q9H0Z9"/>
<dbReference type="TreeFam" id="TF314235"/>
<dbReference type="PathwayCommons" id="Q9H0Z9"/>
<dbReference type="SignaLink" id="Q9H0Z9"/>
<dbReference type="SIGNOR" id="Q9H0Z9"/>
<dbReference type="BioGRID-ORCS" id="55544">
    <property type="hits" value="28 hits in 1159 CRISPR screens"/>
</dbReference>
<dbReference type="CD-CODE" id="DEE660B4">
    <property type="entry name" value="Stress granule"/>
</dbReference>
<dbReference type="ChiTaRS" id="RBM38">
    <property type="organism name" value="human"/>
</dbReference>
<dbReference type="EvolutionaryTrace" id="Q9H0Z9"/>
<dbReference type="GenomeRNAi" id="55544"/>
<dbReference type="Pharos" id="Q9H0Z9">
    <property type="development level" value="Tbio"/>
</dbReference>
<dbReference type="PRO" id="PR:Q9H0Z9"/>
<dbReference type="Proteomes" id="UP000005640">
    <property type="component" value="Chromosome 20"/>
</dbReference>
<dbReference type="RNAct" id="Q9H0Z9">
    <property type="molecule type" value="protein"/>
</dbReference>
<dbReference type="Bgee" id="ENSG00000132819">
    <property type="expression patterns" value="Expressed in hindlimb stylopod muscle and 195 other cell types or tissues"/>
</dbReference>
<dbReference type="ExpressionAtlas" id="Q9H0Z9">
    <property type="expression patterns" value="baseline and differential"/>
</dbReference>
<dbReference type="GO" id="GO:0005829">
    <property type="term" value="C:cytosol"/>
    <property type="evidence" value="ECO:0000314"/>
    <property type="project" value="UniProtKB"/>
</dbReference>
<dbReference type="GO" id="GO:0005634">
    <property type="term" value="C:nucleus"/>
    <property type="evidence" value="ECO:0000314"/>
    <property type="project" value="UniProtKB"/>
</dbReference>
<dbReference type="GO" id="GO:0003730">
    <property type="term" value="F:mRNA 3'-UTR binding"/>
    <property type="evidence" value="ECO:0000314"/>
    <property type="project" value="UniProtKB"/>
</dbReference>
<dbReference type="GO" id="GO:0003729">
    <property type="term" value="F:mRNA binding"/>
    <property type="evidence" value="ECO:0000314"/>
    <property type="project" value="UniProtKB"/>
</dbReference>
<dbReference type="GO" id="GO:0003723">
    <property type="term" value="F:RNA binding"/>
    <property type="evidence" value="ECO:0007005"/>
    <property type="project" value="UniProtKB"/>
</dbReference>
<dbReference type="GO" id="GO:0070935">
    <property type="term" value="P:3'-UTR-mediated mRNA stabilization"/>
    <property type="evidence" value="ECO:0000314"/>
    <property type="project" value="UniProtKB"/>
</dbReference>
<dbReference type="GO" id="GO:0030154">
    <property type="term" value="P:cell differentiation"/>
    <property type="evidence" value="ECO:0007669"/>
    <property type="project" value="UniProtKB-KW"/>
</dbReference>
<dbReference type="GO" id="GO:0030330">
    <property type="term" value="P:DNA damage response, signal transduction by p53 class mediator"/>
    <property type="evidence" value="ECO:0000314"/>
    <property type="project" value="UniProtKB"/>
</dbReference>
<dbReference type="GO" id="GO:0006397">
    <property type="term" value="P:mRNA processing"/>
    <property type="evidence" value="ECO:0007669"/>
    <property type="project" value="UniProtKB-KW"/>
</dbReference>
<dbReference type="GO" id="GO:0008285">
    <property type="term" value="P:negative regulation of cell population proliferation"/>
    <property type="evidence" value="ECO:0000314"/>
    <property type="project" value="UniProtKB"/>
</dbReference>
<dbReference type="GO" id="GO:0051726">
    <property type="term" value="P:regulation of cell cycle"/>
    <property type="evidence" value="ECO:0000314"/>
    <property type="project" value="UniProtKB"/>
</dbReference>
<dbReference type="GO" id="GO:0010830">
    <property type="term" value="P:regulation of myotube differentiation"/>
    <property type="evidence" value="ECO:0007669"/>
    <property type="project" value="Ensembl"/>
</dbReference>
<dbReference type="GO" id="GO:0043484">
    <property type="term" value="P:regulation of RNA splicing"/>
    <property type="evidence" value="ECO:0000314"/>
    <property type="project" value="UniProtKB"/>
</dbReference>
<dbReference type="GO" id="GO:0008380">
    <property type="term" value="P:RNA splicing"/>
    <property type="evidence" value="ECO:0007669"/>
    <property type="project" value="UniProtKB-KW"/>
</dbReference>
<dbReference type="CDD" id="cd12384">
    <property type="entry name" value="RRM_RBM24_RBM38_like"/>
    <property type="match status" value="1"/>
</dbReference>
<dbReference type="FunFam" id="3.30.70.330:FF:000524">
    <property type="entry name" value="RNA-binding motif protein 38"/>
    <property type="match status" value="1"/>
</dbReference>
<dbReference type="Gene3D" id="3.30.70.330">
    <property type="match status" value="1"/>
</dbReference>
<dbReference type="InterPro" id="IPR012677">
    <property type="entry name" value="Nucleotide-bd_a/b_plait_sf"/>
</dbReference>
<dbReference type="InterPro" id="IPR035979">
    <property type="entry name" value="RBD_domain_sf"/>
</dbReference>
<dbReference type="InterPro" id="IPR050886">
    <property type="entry name" value="RNA-binding_reg"/>
</dbReference>
<dbReference type="InterPro" id="IPR000504">
    <property type="entry name" value="RRM_dom"/>
</dbReference>
<dbReference type="PANTHER" id="PTHR48024">
    <property type="entry name" value="GEO13361P1-RELATED"/>
    <property type="match status" value="1"/>
</dbReference>
<dbReference type="PANTHER" id="PTHR48024:SF28">
    <property type="entry name" value="RNA-BINDING PROTEIN 38"/>
    <property type="match status" value="1"/>
</dbReference>
<dbReference type="Pfam" id="PF00076">
    <property type="entry name" value="RRM_1"/>
    <property type="match status" value="1"/>
</dbReference>
<dbReference type="SMART" id="SM00360">
    <property type="entry name" value="RRM"/>
    <property type="match status" value="1"/>
</dbReference>
<dbReference type="SUPFAM" id="SSF54928">
    <property type="entry name" value="RNA-binding domain, RBD"/>
    <property type="match status" value="1"/>
</dbReference>
<dbReference type="PROSITE" id="PS50102">
    <property type="entry name" value="RRM"/>
    <property type="match status" value="1"/>
</dbReference>
<comment type="function">
    <text evidence="2 3">RNA-binding protein that specifically bind the 3'-UTR of CDKN1A transcripts, leading to maintain the stability of CDKN1A transcripts, thereby acting as a mediator of the p53/TP53 family to regulate CDKN1A. CDKN1A is a cyclin-dependent kinase inhibitor transcriptionally regulated by the p53/TP53 family to induce cell cycle arrest. Isoform 1, but not isoform 2, has the ability to induce cell cycle arrest in G1 and maintain the stability of CDKN1A transcripts induced by p53/TP53. Also acts as a mRNA splicing factor. Specifically regulates the expression of FGFR2-IIIb, an epithelial cell-specific isoform of FGFR2. Plays a role in myogenic differentiation.</text>
</comment>
<comment type="function">
    <text evidence="4">(Microbial infection) Essential factor for the splicing of the pre-mRNAs of human parvovirus B19 (B19V) and for the expression of B19V 11-kDa protein, which enhances viral replication.</text>
</comment>
<comment type="interaction">
    <interactant intactId="EBI-2840723">
        <id>Q9H0Z9</id>
    </interactant>
    <interactant intactId="EBI-351590">
        <id>P31943</id>
        <label>HNRNPH1</label>
    </interactant>
    <organismsDiffer>false</organismsDiffer>
    <experiments>3</experiments>
</comment>
<comment type="interaction">
    <interactant intactId="EBI-2840723">
        <id>Q9H0Z9</id>
    </interactant>
    <interactant intactId="EBI-742550">
        <id>Q96K80</id>
        <label>ZC3H10</label>
    </interactant>
    <organismsDiffer>false</organismsDiffer>
    <experiments>3</experiments>
</comment>
<comment type="subcellular location">
    <subcellularLocation>
        <location evidence="2">Cytoplasm</location>
        <location evidence="2">Cytosol</location>
    </subcellularLocation>
    <subcellularLocation>
        <location evidence="2">Nucleus</location>
    </subcellularLocation>
</comment>
<comment type="alternative products">
    <event type="alternative splicing"/>
    <isoform>
        <id>Q9H0Z9-1</id>
        <name>1</name>
        <name>RNPC1a</name>
        <sequence type="displayed"/>
    </isoform>
    <isoform>
        <id>Q9H0Z9-2</id>
        <name>2</name>
        <name>RNPC1b</name>
        <sequence type="described" ref="VSP_035881"/>
    </isoform>
</comment>
<comment type="induction">
    <text evidence="2">By p53/TP53 family. Directly induced by p53/TP53, TP63/p63 and TP73/p73.</text>
</comment>
<comment type="similarity">
    <text evidence="6">Belongs to the RBM38 family.</text>
</comment>
<comment type="caution">
    <text evidence="6">It is uncertain whether Met-1 or Met-24 is the initiator.</text>
</comment>
<comment type="sequence caution" evidence="6">
    <conflict type="erroneous initiation">
        <sequence resource="EMBL-CDS" id="AAH18711"/>
    </conflict>
    <text>Truncated N-terminus.</text>
</comment>
<comment type="sequence caution" evidence="6">
    <conflict type="erroneous initiation">
        <sequence resource="EMBL-CDS" id="AAL99924"/>
    </conflict>
    <text>Truncated N-terminus.</text>
</comment>
<comment type="sequence caution" evidence="6">
    <conflict type="miscellaneous discrepancy">
        <sequence resource="EMBL-CDS" id="CAA53064"/>
    </conflict>
    <text>Chimeric cDNA.</text>
</comment>
<comment type="sequence caution" evidence="6">
    <conflict type="erroneous gene model prediction">
        <sequence resource="EMBL-CDS" id="EAW75522"/>
    </conflict>
</comment>
<keyword id="KW-0002">3D-structure</keyword>
<keyword id="KW-0025">Alternative splicing</keyword>
<keyword id="KW-0131">Cell cycle</keyword>
<keyword id="KW-0963">Cytoplasm</keyword>
<keyword id="KW-0221">Differentiation</keyword>
<keyword id="KW-0945">Host-virus interaction</keyword>
<keyword id="KW-0507">mRNA processing</keyword>
<keyword id="KW-0508">mRNA splicing</keyword>
<keyword id="KW-0539">Nucleus</keyword>
<keyword id="KW-1267">Proteomics identification</keyword>
<keyword id="KW-1185">Reference proteome</keyword>
<keyword id="KW-0694">RNA-binding</keyword>
<gene>
    <name type="primary">RBM38</name>
    <name type="synonym">RNPC1</name>
    <name type="synonym">SEB4</name>
</gene>
<organism>
    <name type="scientific">Homo sapiens</name>
    <name type="common">Human</name>
    <dbReference type="NCBI Taxonomy" id="9606"/>
    <lineage>
        <taxon>Eukaryota</taxon>
        <taxon>Metazoa</taxon>
        <taxon>Chordata</taxon>
        <taxon>Craniata</taxon>
        <taxon>Vertebrata</taxon>
        <taxon>Euteleostomi</taxon>
        <taxon>Mammalia</taxon>
        <taxon>Eutheria</taxon>
        <taxon>Euarchontoglires</taxon>
        <taxon>Primates</taxon>
        <taxon>Haplorrhini</taxon>
        <taxon>Catarrhini</taxon>
        <taxon>Hominidae</taxon>
        <taxon>Homo</taxon>
    </lineage>
</organism>
<sequence>MLLQPAPCAPSAGFPRPLAAPGAMHGSQKDTTFTKIFVGGLPYHTTDASLRKYFEGFGDIEEAVVITDRQTGKSRGYGFVTMADRAAAERACKDPNPIIDGRKANVNLAYLGAKPRSLQTGFAIGVQQLHPTLIQRTYGLTPHYIYPPAIVQPSVVIPAAPVPSLSSPYIEYTPASPAYAQYPPATYDQYPYAASPATAASFVGYSYPAAVPQALSAAAPAGTTFVQYQAPQLQPDRMQ</sequence>
<accession>Q9H0Z9</accession>
<accession>A6NDK1</accession>
<accession>A6NMU6</accession>
<accession>Q15350</accession>
<accession>Q15351</accession>
<accession>Q9BYK3</accession>
<accession>Q9BYK4</accession>
<proteinExistence type="evidence at protein level"/>
<name>RBM38_HUMAN</name>
<reference key="1">
    <citation type="journal article" date="2002" name="Blood">
        <title>Identification of tumor-associated antigens in chronic lymphocytic leukemia by SEREX.</title>
        <authorList>
            <person name="Krackhardt A.M."/>
            <person name="Witzens M."/>
            <person name="Harig S."/>
            <person name="Hodi F.S."/>
            <person name="Zauls A.J."/>
            <person name="Chessia M."/>
            <person name="Barrett P."/>
            <person name="Gribben J.G."/>
        </authorList>
    </citation>
    <scope>NUCLEOTIDE SEQUENCE [MRNA]</scope>
    <source>
        <tissue>Leukemia</tissue>
    </source>
</reference>
<reference key="2">
    <citation type="journal article" date="2001" name="Nature">
        <title>The DNA sequence and comparative analysis of human chromosome 20.</title>
        <authorList>
            <person name="Deloukas P."/>
            <person name="Matthews L.H."/>
            <person name="Ashurst J.L."/>
            <person name="Burton J."/>
            <person name="Gilbert J.G.R."/>
            <person name="Jones M."/>
            <person name="Stavrides G."/>
            <person name="Almeida J.P."/>
            <person name="Babbage A.K."/>
            <person name="Bagguley C.L."/>
            <person name="Bailey J."/>
            <person name="Barlow K.F."/>
            <person name="Bates K.N."/>
            <person name="Beard L.M."/>
            <person name="Beare D.M."/>
            <person name="Beasley O.P."/>
            <person name="Bird C.P."/>
            <person name="Blakey S.E."/>
            <person name="Bridgeman A.M."/>
            <person name="Brown A.J."/>
            <person name="Buck D."/>
            <person name="Burrill W.D."/>
            <person name="Butler A.P."/>
            <person name="Carder C."/>
            <person name="Carter N.P."/>
            <person name="Chapman J.C."/>
            <person name="Clamp M."/>
            <person name="Clark G."/>
            <person name="Clark L.N."/>
            <person name="Clark S.Y."/>
            <person name="Clee C.M."/>
            <person name="Clegg S."/>
            <person name="Cobley V.E."/>
            <person name="Collier R.E."/>
            <person name="Connor R.E."/>
            <person name="Corby N.R."/>
            <person name="Coulson A."/>
            <person name="Coville G.J."/>
            <person name="Deadman R."/>
            <person name="Dhami P.D."/>
            <person name="Dunn M."/>
            <person name="Ellington A.G."/>
            <person name="Frankland J.A."/>
            <person name="Fraser A."/>
            <person name="French L."/>
            <person name="Garner P."/>
            <person name="Grafham D.V."/>
            <person name="Griffiths C."/>
            <person name="Griffiths M.N.D."/>
            <person name="Gwilliam R."/>
            <person name="Hall R.E."/>
            <person name="Hammond S."/>
            <person name="Harley J.L."/>
            <person name="Heath P.D."/>
            <person name="Ho S."/>
            <person name="Holden J.L."/>
            <person name="Howden P.J."/>
            <person name="Huckle E."/>
            <person name="Hunt A.R."/>
            <person name="Hunt S.E."/>
            <person name="Jekosch K."/>
            <person name="Johnson C.M."/>
            <person name="Johnson D."/>
            <person name="Kay M.P."/>
            <person name="Kimberley A.M."/>
            <person name="King A."/>
            <person name="Knights A."/>
            <person name="Laird G.K."/>
            <person name="Lawlor S."/>
            <person name="Lehvaeslaiho M.H."/>
            <person name="Leversha M.A."/>
            <person name="Lloyd C."/>
            <person name="Lloyd D.M."/>
            <person name="Lovell J.D."/>
            <person name="Marsh V.L."/>
            <person name="Martin S.L."/>
            <person name="McConnachie L.J."/>
            <person name="McLay K."/>
            <person name="McMurray A.A."/>
            <person name="Milne S.A."/>
            <person name="Mistry D."/>
            <person name="Moore M.J.F."/>
            <person name="Mullikin J.C."/>
            <person name="Nickerson T."/>
            <person name="Oliver K."/>
            <person name="Parker A."/>
            <person name="Patel R."/>
            <person name="Pearce T.A.V."/>
            <person name="Peck A.I."/>
            <person name="Phillimore B.J.C.T."/>
            <person name="Prathalingam S.R."/>
            <person name="Plumb R.W."/>
            <person name="Ramsay H."/>
            <person name="Rice C.M."/>
            <person name="Ross M.T."/>
            <person name="Scott C.E."/>
            <person name="Sehra H.K."/>
            <person name="Shownkeen R."/>
            <person name="Sims S."/>
            <person name="Skuce C.D."/>
            <person name="Smith M.L."/>
            <person name="Soderlund C."/>
            <person name="Steward C.A."/>
            <person name="Sulston J.E."/>
            <person name="Swann R.M."/>
            <person name="Sycamore N."/>
            <person name="Taylor R."/>
            <person name="Tee L."/>
            <person name="Thomas D.W."/>
            <person name="Thorpe A."/>
            <person name="Tracey A."/>
            <person name="Tromans A.C."/>
            <person name="Vaudin M."/>
            <person name="Wall M."/>
            <person name="Wallis J.M."/>
            <person name="Whitehead S.L."/>
            <person name="Whittaker P."/>
            <person name="Willey D.L."/>
            <person name="Williams L."/>
            <person name="Williams S.A."/>
            <person name="Wilming L."/>
            <person name="Wray P.W."/>
            <person name="Hubbard T."/>
            <person name="Durbin R.M."/>
            <person name="Bentley D.R."/>
            <person name="Beck S."/>
            <person name="Rogers J."/>
        </authorList>
    </citation>
    <scope>NUCLEOTIDE SEQUENCE [LARGE SCALE GENOMIC DNA]</scope>
</reference>
<reference key="3">
    <citation type="submission" date="2005-09" db="EMBL/GenBank/DDBJ databases">
        <authorList>
            <person name="Mural R.J."/>
            <person name="Istrail S."/>
            <person name="Sutton G.G."/>
            <person name="Florea L."/>
            <person name="Halpern A.L."/>
            <person name="Mobarry C.M."/>
            <person name="Lippert R."/>
            <person name="Walenz B."/>
            <person name="Shatkay H."/>
            <person name="Dew I."/>
            <person name="Miller J.R."/>
            <person name="Flanigan M.J."/>
            <person name="Edwards N.J."/>
            <person name="Bolanos R."/>
            <person name="Fasulo D."/>
            <person name="Halldorsson B.V."/>
            <person name="Hannenhalli S."/>
            <person name="Turner R."/>
            <person name="Yooseph S."/>
            <person name="Lu F."/>
            <person name="Nusskern D.R."/>
            <person name="Shue B.C."/>
            <person name="Zheng X.H."/>
            <person name="Zhong F."/>
            <person name="Delcher A.L."/>
            <person name="Huson D.H."/>
            <person name="Kravitz S.A."/>
            <person name="Mouchard L."/>
            <person name="Reinert K."/>
            <person name="Remington K.A."/>
            <person name="Clark A.G."/>
            <person name="Waterman M.S."/>
            <person name="Eichler E.E."/>
            <person name="Adams M.D."/>
            <person name="Hunkapiller M.W."/>
            <person name="Myers E.W."/>
            <person name="Venter J.C."/>
        </authorList>
    </citation>
    <scope>NUCLEOTIDE SEQUENCE [LARGE SCALE GENOMIC DNA]</scope>
</reference>
<reference key="4">
    <citation type="submission" date="1993-09" db="EMBL/GenBank/DDBJ databases">
        <title>A novel murine RRM-type protein and its human homolog.</title>
        <authorList>
            <person name="Ruehlmann A."/>
            <person name="Gupta A."/>
            <person name="Terhorst C."/>
        </authorList>
    </citation>
    <scope>NUCLEOTIDE SEQUENCE [MRNA] OF 11-239</scope>
    <scope>VARIANTS VAL-178; ASP-200 AND HIS-212</scope>
    <source>
        <tissue>Thymus</tissue>
    </source>
</reference>
<reference key="5">
    <citation type="journal article" date="2004" name="Genome Res.">
        <title>The status, quality, and expansion of the NIH full-length cDNA project: the Mammalian Gene Collection (MGC).</title>
        <authorList>
            <consortium name="The MGC Project Team"/>
        </authorList>
    </citation>
    <scope>NUCLEOTIDE SEQUENCE [LARGE SCALE MRNA] OF 23-239</scope>
    <source>
        <tissue>Tonsil</tissue>
    </source>
</reference>
<reference key="6">
    <citation type="journal article" date="2006" name="Genes Dev.">
        <title>RNPC1, an RNA-binding protein and a target of the p53 family, is required for maintaining the stability of the basal and stress-induced p21 transcript.</title>
        <authorList>
            <person name="Shu L."/>
            <person name="Yan W."/>
            <person name="Chen X."/>
        </authorList>
    </citation>
    <scope>FUNCTION</scope>
    <scope>ALTERNATIVE SPLICING (ISOFORMS 1 AND 2)</scope>
    <scope>RNA-BINDING</scope>
    <scope>SUBCELLULAR LOCATION</scope>
    <scope>INDUCTION</scope>
</reference>
<reference key="7">
    <citation type="journal article" date="2009" name="Mol. Cell">
        <title>ESRP1 and ESRP2 are epithelial cell-type-specific regulators of FGFR2 splicing.</title>
        <authorList>
            <person name="Warzecha C.C."/>
            <person name="Sato T.K."/>
            <person name="Nabet B."/>
            <person name="Hogenesch J.B."/>
            <person name="Carstens R.P."/>
        </authorList>
    </citation>
    <scope>FUNCTION</scope>
</reference>
<reference key="8">
    <citation type="submission" date="2005-05" db="PDB data bank">
        <title>Solution structure of the RNA recognition motif in RNA-binding region containing protein 1.</title>
        <authorList>
            <consortium name="RIKEN structural genomics initiative (RSGI)"/>
        </authorList>
    </citation>
    <scope>STRUCTURE BY NMR OF 24-126</scope>
</reference>
<reference key="9">
    <citation type="journal article" date="2018" name="J. Virol.">
        <title>RNA binding protein RBM38 regulates expression of the 11-Kilodalton protein of Parvovirus B19, which facilitates viral DNA replication.</title>
        <authorList>
            <person name="Ganaie S.S."/>
            <person name="Chen A.Y."/>
            <person name="Huang C."/>
            <person name="Xu P."/>
            <person name="Kleiboeker S."/>
            <person name="Du A."/>
            <person name="Qiu J."/>
        </authorList>
    </citation>
    <scope>FUNCTION (MICROBIAL INFECTION)</scope>
</reference>